<protein>
    <recommendedName>
        <fullName>Uncharacterized 20.8 kDa protein in lys 3'region</fullName>
    </recommendedName>
    <alternativeName>
        <fullName>ORF34</fullName>
    </alternativeName>
</protein>
<name>YO34_BPHC1</name>
<accession>P51738</accession>
<organismHost>
    <name type="scientific">Haemophilus influenzae</name>
    <dbReference type="NCBI Taxonomy" id="727"/>
</organismHost>
<keyword id="KW-1185">Reference proteome</keyword>
<reference key="1">
    <citation type="journal article" date="1996" name="Nucleic Acids Res.">
        <title>The complete nucleotide sequence of bacteriophage HP1 DNA.</title>
        <authorList>
            <person name="Esposito D."/>
            <person name="Fitzmaurice W.P."/>
            <person name="Benjamin R.C."/>
            <person name="Goodman S.D."/>
            <person name="Waldman A.S."/>
            <person name="Scocca J.J."/>
        </authorList>
    </citation>
    <scope>NUCLEOTIDE SEQUENCE [LARGE SCALE GENOMIC DNA]</scope>
</reference>
<sequence length="187" mass="20761">MQKRNPSVQLALNGTPIYLNNILMSVSVKREEKDMSGQKSSTKKSDKGVKAKELSVTGFIPYNRKEWLTQLFNLAEAETGKGEQTKYRVSCTVAEAVNMREVQFSGEVSATEQNGQLGWSISFRLREVNSVAEKKDQRKKKPKVKTQGENAPVAKSAGENSGKLEEQKDERKGIAKDIDDFFGGIDG</sequence>
<feature type="chain" id="PRO_0000165343" description="Uncharacterized 20.8 kDa protein in lys 3'region">
    <location>
        <begin position="1"/>
        <end position="187"/>
    </location>
</feature>
<feature type="region of interest" description="Disordered" evidence="1">
    <location>
        <begin position="131"/>
        <end position="187"/>
    </location>
</feature>
<feature type="compositionally biased region" description="Basic and acidic residues" evidence="1">
    <location>
        <begin position="162"/>
        <end position="179"/>
    </location>
</feature>
<dbReference type="EMBL" id="U24159">
    <property type="protein sequence ID" value="AAB09221.1"/>
    <property type="molecule type" value="Genomic_DNA"/>
</dbReference>
<dbReference type="PIR" id="S69542">
    <property type="entry name" value="S69542"/>
</dbReference>
<dbReference type="RefSeq" id="NP_043505.1">
    <property type="nucleotide sequence ID" value="NC_001697.1"/>
</dbReference>
<dbReference type="GeneID" id="1261110"/>
<dbReference type="KEGG" id="vg:1261110"/>
<dbReference type="Proteomes" id="UP000001713">
    <property type="component" value="Segment"/>
</dbReference>
<organism>
    <name type="scientific">Haemophilus phage HP1 (strain HP1c1)</name>
    <name type="common">Bacteriophage HP1</name>
    <dbReference type="NCBI Taxonomy" id="1289570"/>
    <lineage>
        <taxon>Viruses</taxon>
        <taxon>Duplodnaviria</taxon>
        <taxon>Heunggongvirae</taxon>
        <taxon>Uroviricota</taxon>
        <taxon>Caudoviricetes</taxon>
        <taxon>Peduoviridae</taxon>
        <taxon>Hpunavirus</taxon>
        <taxon>Haemophilus phage HP1</taxon>
    </lineage>
</organism>
<proteinExistence type="predicted"/>
<evidence type="ECO:0000256" key="1">
    <source>
        <dbReference type="SAM" id="MobiDB-lite"/>
    </source>
</evidence>